<name>RSGA_MESH7</name>
<protein>
    <recommendedName>
        <fullName evidence="1">Small ribosomal subunit biogenesis GTPase RsgA</fullName>
        <ecNumber evidence="1">3.6.1.-</ecNumber>
    </recommendedName>
</protein>
<gene>
    <name evidence="1" type="primary">rsgA</name>
    <name type="ordered locus">MHP7448_0152</name>
</gene>
<dbReference type="EC" id="3.6.1.-" evidence="1"/>
<dbReference type="EMBL" id="AE017244">
    <property type="protein sequence ID" value="AAZ53526.1"/>
    <property type="molecule type" value="Genomic_DNA"/>
</dbReference>
<dbReference type="RefSeq" id="WP_011290043.1">
    <property type="nucleotide sequence ID" value="NC_007332.1"/>
</dbReference>
<dbReference type="SMR" id="Q4A8L3"/>
<dbReference type="KEGG" id="mhp:MHP7448_0152"/>
<dbReference type="HOGENOM" id="CLU_033617_2_1_14"/>
<dbReference type="Proteomes" id="UP000000553">
    <property type="component" value="Chromosome"/>
</dbReference>
<dbReference type="GO" id="GO:0005737">
    <property type="term" value="C:cytoplasm"/>
    <property type="evidence" value="ECO:0007669"/>
    <property type="project" value="UniProtKB-SubCell"/>
</dbReference>
<dbReference type="GO" id="GO:0005525">
    <property type="term" value="F:GTP binding"/>
    <property type="evidence" value="ECO:0007669"/>
    <property type="project" value="UniProtKB-UniRule"/>
</dbReference>
<dbReference type="GO" id="GO:0003924">
    <property type="term" value="F:GTPase activity"/>
    <property type="evidence" value="ECO:0007669"/>
    <property type="project" value="UniProtKB-UniRule"/>
</dbReference>
<dbReference type="GO" id="GO:0046872">
    <property type="term" value="F:metal ion binding"/>
    <property type="evidence" value="ECO:0007669"/>
    <property type="project" value="UniProtKB-KW"/>
</dbReference>
<dbReference type="GO" id="GO:0019843">
    <property type="term" value="F:rRNA binding"/>
    <property type="evidence" value="ECO:0007669"/>
    <property type="project" value="UniProtKB-KW"/>
</dbReference>
<dbReference type="GO" id="GO:0042274">
    <property type="term" value="P:ribosomal small subunit biogenesis"/>
    <property type="evidence" value="ECO:0007669"/>
    <property type="project" value="UniProtKB-UniRule"/>
</dbReference>
<dbReference type="CDD" id="cd01854">
    <property type="entry name" value="YjeQ_EngC"/>
    <property type="match status" value="1"/>
</dbReference>
<dbReference type="Gene3D" id="2.40.50.140">
    <property type="entry name" value="Nucleic acid-binding proteins"/>
    <property type="match status" value="1"/>
</dbReference>
<dbReference type="Gene3D" id="3.40.50.300">
    <property type="entry name" value="P-loop containing nucleotide triphosphate hydrolases"/>
    <property type="match status" value="1"/>
</dbReference>
<dbReference type="Gene3D" id="1.10.40.50">
    <property type="entry name" value="Probable gtpase engc, domain 3"/>
    <property type="match status" value="1"/>
</dbReference>
<dbReference type="HAMAP" id="MF_01820">
    <property type="entry name" value="GTPase_RsgA"/>
    <property type="match status" value="1"/>
</dbReference>
<dbReference type="InterPro" id="IPR030378">
    <property type="entry name" value="G_CP_dom"/>
</dbReference>
<dbReference type="InterPro" id="IPR012340">
    <property type="entry name" value="NA-bd_OB-fold"/>
</dbReference>
<dbReference type="InterPro" id="IPR027417">
    <property type="entry name" value="P-loop_NTPase"/>
</dbReference>
<dbReference type="InterPro" id="IPR004881">
    <property type="entry name" value="Ribosome_biogen_GTPase_RsgA"/>
</dbReference>
<dbReference type="InterPro" id="IPR010914">
    <property type="entry name" value="RsgA_GTPase_dom"/>
</dbReference>
<dbReference type="InterPro" id="IPR031944">
    <property type="entry name" value="RsgA_N"/>
</dbReference>
<dbReference type="NCBIfam" id="TIGR00157">
    <property type="entry name" value="ribosome small subunit-dependent GTPase A"/>
    <property type="match status" value="1"/>
</dbReference>
<dbReference type="PANTHER" id="PTHR32120">
    <property type="entry name" value="SMALL RIBOSOMAL SUBUNIT BIOGENESIS GTPASE RSGA"/>
    <property type="match status" value="1"/>
</dbReference>
<dbReference type="PANTHER" id="PTHR32120:SF11">
    <property type="entry name" value="SMALL RIBOSOMAL SUBUNIT BIOGENESIS GTPASE RSGA 1, MITOCHONDRIAL-RELATED"/>
    <property type="match status" value="1"/>
</dbReference>
<dbReference type="Pfam" id="PF03193">
    <property type="entry name" value="RsgA_GTPase"/>
    <property type="match status" value="1"/>
</dbReference>
<dbReference type="Pfam" id="PF16745">
    <property type="entry name" value="RsgA_N"/>
    <property type="match status" value="1"/>
</dbReference>
<dbReference type="SUPFAM" id="SSF50249">
    <property type="entry name" value="Nucleic acid-binding proteins"/>
    <property type="match status" value="1"/>
</dbReference>
<dbReference type="SUPFAM" id="SSF52540">
    <property type="entry name" value="P-loop containing nucleoside triphosphate hydrolases"/>
    <property type="match status" value="1"/>
</dbReference>
<dbReference type="PROSITE" id="PS50936">
    <property type="entry name" value="ENGC_GTPASE"/>
    <property type="match status" value="1"/>
</dbReference>
<dbReference type="PROSITE" id="PS51721">
    <property type="entry name" value="G_CP"/>
    <property type="match status" value="1"/>
</dbReference>
<organism>
    <name type="scientific">Mesomycoplasma hyopneumoniae (strain 7448)</name>
    <name type="common">Mycoplasma hyopneumoniae</name>
    <dbReference type="NCBI Taxonomy" id="262722"/>
    <lineage>
        <taxon>Bacteria</taxon>
        <taxon>Bacillati</taxon>
        <taxon>Mycoplasmatota</taxon>
        <taxon>Mycoplasmoidales</taxon>
        <taxon>Metamycoplasmataceae</taxon>
        <taxon>Mesomycoplasma</taxon>
    </lineage>
</organism>
<reference key="1">
    <citation type="journal article" date="2005" name="J. Bacteriol.">
        <title>Swine and poultry pathogens: the complete genome sequences of two strains of Mycoplasma hyopneumoniae and a strain of Mycoplasma synoviae.</title>
        <authorList>
            <person name="Vasconcelos A.T.R."/>
            <person name="Ferreira H.B."/>
            <person name="Bizarro C.V."/>
            <person name="Bonatto S.L."/>
            <person name="Carvalho M.O."/>
            <person name="Pinto P.M."/>
            <person name="Almeida D.F."/>
            <person name="Almeida L.G.P."/>
            <person name="Almeida R."/>
            <person name="Alves-Junior L."/>
            <person name="Assuncao E.N."/>
            <person name="Azevedo V.A.C."/>
            <person name="Bogo M.R."/>
            <person name="Brigido M.M."/>
            <person name="Brocchi M."/>
            <person name="Burity H.A."/>
            <person name="Camargo A.A."/>
            <person name="Camargo S.S."/>
            <person name="Carepo M.S."/>
            <person name="Carraro D.M."/>
            <person name="de Mattos Cascardo J.C."/>
            <person name="Castro L.A."/>
            <person name="Cavalcanti G."/>
            <person name="Chemale G."/>
            <person name="Collevatti R.G."/>
            <person name="Cunha C.W."/>
            <person name="Dallagiovanna B."/>
            <person name="Dambros B.P."/>
            <person name="Dellagostin O.A."/>
            <person name="Falcao C."/>
            <person name="Fantinatti-Garboggini F."/>
            <person name="Felipe M.S.S."/>
            <person name="Fiorentin L."/>
            <person name="Franco G.R."/>
            <person name="Freitas N.S.A."/>
            <person name="Frias D."/>
            <person name="Grangeiro T.B."/>
            <person name="Grisard E.C."/>
            <person name="Guimaraes C.T."/>
            <person name="Hungria M."/>
            <person name="Jardim S.N."/>
            <person name="Krieger M.A."/>
            <person name="Laurino J.P."/>
            <person name="Lima L.F.A."/>
            <person name="Lopes M.I."/>
            <person name="Loreto E.L.S."/>
            <person name="Madeira H.M.F."/>
            <person name="Manfio G.P."/>
            <person name="Maranhao A.Q."/>
            <person name="Martinkovics C.T."/>
            <person name="Medeiros S.R.B."/>
            <person name="Moreira M.A.M."/>
            <person name="Neiva M."/>
            <person name="Ramalho-Neto C.E."/>
            <person name="Nicolas M.F."/>
            <person name="Oliveira S.C."/>
            <person name="Paixao R.F.C."/>
            <person name="Pedrosa F.O."/>
            <person name="Pena S.D.J."/>
            <person name="Pereira M."/>
            <person name="Pereira-Ferrari L."/>
            <person name="Piffer I."/>
            <person name="Pinto L.S."/>
            <person name="Potrich D.P."/>
            <person name="Salim A.C.M."/>
            <person name="Santos F.R."/>
            <person name="Schmitt R."/>
            <person name="Schneider M.P.C."/>
            <person name="Schrank A."/>
            <person name="Schrank I.S."/>
            <person name="Schuck A.F."/>
            <person name="Seuanez H.N."/>
            <person name="Silva D.W."/>
            <person name="Silva R."/>
            <person name="Silva S.C."/>
            <person name="Soares C.M.A."/>
            <person name="Souza K.R.L."/>
            <person name="Souza R.C."/>
            <person name="Staats C.C."/>
            <person name="Steffens M.B.R."/>
            <person name="Teixeira S.M.R."/>
            <person name="Urmenyi T.P."/>
            <person name="Vainstein M.H."/>
            <person name="Zuccherato L.W."/>
            <person name="Simpson A.J.G."/>
            <person name="Zaha A."/>
        </authorList>
    </citation>
    <scope>NUCLEOTIDE SEQUENCE [LARGE SCALE GENOMIC DNA]</scope>
    <source>
        <strain>7448</strain>
    </source>
</reference>
<sequence length="285" mass="33374">MKGQIVRIIAGFYDVVDLKNRKLYPLLRGSGLLRLNETSPIVGDFVDFEEKGFIKKIYERKNQLIRPKVANIDQALVFISIREPNFSSLLLDKFLLVIEAKNIPVILLVTKIDLDSNFENLLLDYQKMNYNIFFINNKKNEIPVELKLELEKKLNFVIGQTGVGKTSFINNFLDKKFAIQEISQTLNRGKHTTRVVQIIEKENFRIIDSPGFSSFSYSEISKNEIRNAFKIFKKFSSDCKFRSCFHFQEKTDQCAIKRALKDGKIPENRYKNYLYFLGKYEKKNY</sequence>
<keyword id="KW-0963">Cytoplasm</keyword>
<keyword id="KW-0342">GTP-binding</keyword>
<keyword id="KW-0378">Hydrolase</keyword>
<keyword id="KW-0479">Metal-binding</keyword>
<keyword id="KW-0547">Nucleotide-binding</keyword>
<keyword id="KW-0690">Ribosome biogenesis</keyword>
<keyword id="KW-0694">RNA-binding</keyword>
<keyword id="KW-0699">rRNA-binding</keyword>
<keyword id="KW-0862">Zinc</keyword>
<proteinExistence type="inferred from homology"/>
<accession>Q4A8L3</accession>
<comment type="function">
    <text evidence="1">One of several proteins that assist in the late maturation steps of the functional core of the 30S ribosomal subunit. Helps release RbfA from mature subunits. May play a role in the assembly of ribosomal proteins into the subunit. Circularly permuted GTPase that catalyzes slow GTP hydrolysis, GTPase activity is stimulated by the 30S ribosomal subunit.</text>
</comment>
<comment type="cofactor">
    <cofactor evidence="1">
        <name>Zn(2+)</name>
        <dbReference type="ChEBI" id="CHEBI:29105"/>
    </cofactor>
    <text evidence="1">Binds 1 zinc ion per subunit.</text>
</comment>
<comment type="subunit">
    <text evidence="1">Monomer. Associates with 30S ribosomal subunit, binds 16S rRNA.</text>
</comment>
<comment type="subcellular location">
    <subcellularLocation>
        <location evidence="1">Cytoplasm</location>
    </subcellularLocation>
</comment>
<comment type="similarity">
    <text evidence="1">Belongs to the TRAFAC class YlqF/YawG GTPase family. RsgA subfamily.</text>
</comment>
<evidence type="ECO:0000255" key="1">
    <source>
        <dbReference type="HAMAP-Rule" id="MF_01820"/>
    </source>
</evidence>
<evidence type="ECO:0000255" key="2">
    <source>
        <dbReference type="PROSITE-ProRule" id="PRU01058"/>
    </source>
</evidence>
<feature type="chain" id="PRO_1000188104" description="Small ribosomal subunit biogenesis GTPase RsgA">
    <location>
        <begin position="1"/>
        <end position="285"/>
    </location>
</feature>
<feature type="domain" description="CP-type G" evidence="2">
    <location>
        <begin position="61"/>
        <end position="215"/>
    </location>
</feature>
<feature type="binding site" evidence="1">
    <location>
        <begin position="110"/>
        <end position="113"/>
    </location>
    <ligand>
        <name>GTP</name>
        <dbReference type="ChEBI" id="CHEBI:37565"/>
    </ligand>
</feature>
<feature type="binding site" evidence="1">
    <location>
        <begin position="159"/>
        <end position="167"/>
    </location>
    <ligand>
        <name>GTP</name>
        <dbReference type="ChEBI" id="CHEBI:37565"/>
    </ligand>
</feature>
<feature type="binding site" evidence="1">
    <location>
        <position position="239"/>
    </location>
    <ligand>
        <name>Zn(2+)</name>
        <dbReference type="ChEBI" id="CHEBI:29105"/>
    </ligand>
</feature>
<feature type="binding site" evidence="1">
    <location>
        <position position="244"/>
    </location>
    <ligand>
        <name>Zn(2+)</name>
        <dbReference type="ChEBI" id="CHEBI:29105"/>
    </ligand>
</feature>
<feature type="binding site" evidence="1">
    <location>
        <position position="246"/>
    </location>
    <ligand>
        <name>Zn(2+)</name>
        <dbReference type="ChEBI" id="CHEBI:29105"/>
    </ligand>
</feature>
<feature type="binding site" evidence="1">
    <location>
        <position position="254"/>
    </location>
    <ligand>
        <name>Zn(2+)</name>
        <dbReference type="ChEBI" id="CHEBI:29105"/>
    </ligand>
</feature>